<protein>
    <recommendedName>
        <fullName evidence="1">Thiamine-phosphate synthase</fullName>
        <shortName evidence="1">TP synthase</shortName>
        <shortName evidence="1">TPS</shortName>
        <ecNumber evidence="1">2.5.1.3</ecNumber>
    </recommendedName>
    <alternativeName>
        <fullName evidence="1">Thiamine-phosphate pyrophosphorylase</fullName>
        <shortName evidence="1">TMP pyrophosphorylase</shortName>
        <shortName evidence="1">TMP-PPase</shortName>
    </alternativeName>
</protein>
<sequence>MHSRLATARLYLCTDARRERGDLADFADAALAGGVDIIQLRDKGSAGEQRFGPLEARDELAACEILADAAARHAAMFAVNDRADIARAARADVLHLGQRDLPVDVARAITGPATLIGQSTHDRDQVSAAAIGAVDYFCVGPCWPTPTKPGRTAPGLDLVRFAADVAGAKPWFAIGGIDGVRLPEVLAAGARRIVVVRAITAADDPREAAAKLKSELLAAI</sequence>
<organism>
    <name type="scientific">Mycobacterium marinum (strain ATCC BAA-535 / M)</name>
    <dbReference type="NCBI Taxonomy" id="216594"/>
    <lineage>
        <taxon>Bacteria</taxon>
        <taxon>Bacillati</taxon>
        <taxon>Actinomycetota</taxon>
        <taxon>Actinomycetes</taxon>
        <taxon>Mycobacteriales</taxon>
        <taxon>Mycobacteriaceae</taxon>
        <taxon>Mycobacterium</taxon>
        <taxon>Mycobacterium ulcerans group</taxon>
    </lineage>
</organism>
<name>THIE_MYCMM</name>
<gene>
    <name evidence="1" type="primary">thiE</name>
    <name type="ordered locus">MMAR_0717</name>
</gene>
<feature type="chain" id="PRO_1000093680" description="Thiamine-phosphate synthase">
    <location>
        <begin position="1"/>
        <end position="220"/>
    </location>
</feature>
<feature type="binding site" evidence="1">
    <location>
        <begin position="39"/>
        <end position="43"/>
    </location>
    <ligand>
        <name>4-amino-2-methyl-5-(diphosphooxymethyl)pyrimidine</name>
        <dbReference type="ChEBI" id="CHEBI:57841"/>
    </ligand>
</feature>
<feature type="binding site" evidence="1">
    <location>
        <position position="80"/>
    </location>
    <ligand>
        <name>4-amino-2-methyl-5-(diphosphooxymethyl)pyrimidine</name>
        <dbReference type="ChEBI" id="CHEBI:57841"/>
    </ligand>
</feature>
<feature type="binding site" evidence="1">
    <location>
        <position position="81"/>
    </location>
    <ligand>
        <name>Mg(2+)</name>
        <dbReference type="ChEBI" id="CHEBI:18420"/>
    </ligand>
</feature>
<feature type="binding site" evidence="1">
    <location>
        <position position="100"/>
    </location>
    <ligand>
        <name>Mg(2+)</name>
        <dbReference type="ChEBI" id="CHEBI:18420"/>
    </ligand>
</feature>
<feature type="binding site" evidence="1">
    <location>
        <position position="119"/>
    </location>
    <ligand>
        <name>4-amino-2-methyl-5-(diphosphooxymethyl)pyrimidine</name>
        <dbReference type="ChEBI" id="CHEBI:57841"/>
    </ligand>
</feature>
<feature type="binding site" evidence="1">
    <location>
        <begin position="145"/>
        <end position="147"/>
    </location>
    <ligand>
        <name>2-[(2R,5Z)-2-carboxy-4-methylthiazol-5(2H)-ylidene]ethyl phosphate</name>
        <dbReference type="ChEBI" id="CHEBI:62899"/>
    </ligand>
</feature>
<feature type="binding site" evidence="1">
    <location>
        <position position="148"/>
    </location>
    <ligand>
        <name>4-amino-2-methyl-5-(diphosphooxymethyl)pyrimidine</name>
        <dbReference type="ChEBI" id="CHEBI:57841"/>
    </ligand>
</feature>
<feature type="binding site" evidence="1">
    <location>
        <position position="176"/>
    </location>
    <ligand>
        <name>2-[(2R,5Z)-2-carboxy-4-methylthiazol-5(2H)-ylidene]ethyl phosphate</name>
        <dbReference type="ChEBI" id="CHEBI:62899"/>
    </ligand>
</feature>
<dbReference type="EC" id="2.5.1.3" evidence="1"/>
<dbReference type="EMBL" id="CP000854">
    <property type="protein sequence ID" value="ACC39176.1"/>
    <property type="molecule type" value="Genomic_DNA"/>
</dbReference>
<dbReference type="RefSeq" id="WP_012392666.1">
    <property type="nucleotide sequence ID" value="NC_010612.1"/>
</dbReference>
<dbReference type="SMR" id="B2HPZ9"/>
<dbReference type="STRING" id="216594.MMAR_0717"/>
<dbReference type="KEGG" id="mmi:MMAR_0717"/>
<dbReference type="eggNOG" id="COG0352">
    <property type="taxonomic scope" value="Bacteria"/>
</dbReference>
<dbReference type="HOGENOM" id="CLU_018272_3_0_11"/>
<dbReference type="OrthoDB" id="3243336at2"/>
<dbReference type="UniPathway" id="UPA00060">
    <property type="reaction ID" value="UER00141"/>
</dbReference>
<dbReference type="Proteomes" id="UP000001190">
    <property type="component" value="Chromosome"/>
</dbReference>
<dbReference type="GO" id="GO:0005737">
    <property type="term" value="C:cytoplasm"/>
    <property type="evidence" value="ECO:0007669"/>
    <property type="project" value="TreeGrafter"/>
</dbReference>
<dbReference type="GO" id="GO:0000287">
    <property type="term" value="F:magnesium ion binding"/>
    <property type="evidence" value="ECO:0007669"/>
    <property type="project" value="UniProtKB-UniRule"/>
</dbReference>
<dbReference type="GO" id="GO:0004789">
    <property type="term" value="F:thiamine-phosphate diphosphorylase activity"/>
    <property type="evidence" value="ECO:0007669"/>
    <property type="project" value="UniProtKB-UniRule"/>
</dbReference>
<dbReference type="GO" id="GO:0009228">
    <property type="term" value="P:thiamine biosynthetic process"/>
    <property type="evidence" value="ECO:0007669"/>
    <property type="project" value="UniProtKB-KW"/>
</dbReference>
<dbReference type="GO" id="GO:0009229">
    <property type="term" value="P:thiamine diphosphate biosynthetic process"/>
    <property type="evidence" value="ECO:0007669"/>
    <property type="project" value="UniProtKB-UniRule"/>
</dbReference>
<dbReference type="CDD" id="cd00564">
    <property type="entry name" value="TMP_TenI"/>
    <property type="match status" value="1"/>
</dbReference>
<dbReference type="FunFam" id="3.20.20.70:FF:000178">
    <property type="entry name" value="Thiamine-phosphate synthase"/>
    <property type="match status" value="1"/>
</dbReference>
<dbReference type="Gene3D" id="3.20.20.70">
    <property type="entry name" value="Aldolase class I"/>
    <property type="match status" value="1"/>
</dbReference>
<dbReference type="HAMAP" id="MF_00097">
    <property type="entry name" value="TMP_synthase"/>
    <property type="match status" value="1"/>
</dbReference>
<dbReference type="InterPro" id="IPR013785">
    <property type="entry name" value="Aldolase_TIM"/>
</dbReference>
<dbReference type="InterPro" id="IPR036206">
    <property type="entry name" value="ThiamineP_synth_sf"/>
</dbReference>
<dbReference type="InterPro" id="IPR022998">
    <property type="entry name" value="ThiamineP_synth_TenI"/>
</dbReference>
<dbReference type="InterPro" id="IPR034291">
    <property type="entry name" value="TMP_synthase"/>
</dbReference>
<dbReference type="NCBIfam" id="TIGR00693">
    <property type="entry name" value="thiE"/>
    <property type="match status" value="1"/>
</dbReference>
<dbReference type="PANTHER" id="PTHR20857">
    <property type="entry name" value="THIAMINE-PHOSPHATE PYROPHOSPHORYLASE"/>
    <property type="match status" value="1"/>
</dbReference>
<dbReference type="PANTHER" id="PTHR20857:SF15">
    <property type="entry name" value="THIAMINE-PHOSPHATE SYNTHASE"/>
    <property type="match status" value="1"/>
</dbReference>
<dbReference type="Pfam" id="PF02581">
    <property type="entry name" value="TMP-TENI"/>
    <property type="match status" value="1"/>
</dbReference>
<dbReference type="SUPFAM" id="SSF51391">
    <property type="entry name" value="Thiamin phosphate synthase"/>
    <property type="match status" value="1"/>
</dbReference>
<keyword id="KW-0460">Magnesium</keyword>
<keyword id="KW-0479">Metal-binding</keyword>
<keyword id="KW-1185">Reference proteome</keyword>
<keyword id="KW-0784">Thiamine biosynthesis</keyword>
<keyword id="KW-0808">Transferase</keyword>
<comment type="function">
    <text evidence="1">Condenses 4-methyl-5-(beta-hydroxyethyl)thiazole monophosphate (THZ-P) and 2-methyl-4-amino-5-hydroxymethyl pyrimidine pyrophosphate (HMP-PP) to form thiamine monophosphate (TMP).</text>
</comment>
<comment type="catalytic activity">
    <reaction evidence="1">
        <text>2-[(2R,5Z)-2-carboxy-4-methylthiazol-5(2H)-ylidene]ethyl phosphate + 4-amino-2-methyl-5-(diphosphooxymethyl)pyrimidine + 2 H(+) = thiamine phosphate + CO2 + diphosphate</text>
        <dbReference type="Rhea" id="RHEA:47844"/>
        <dbReference type="ChEBI" id="CHEBI:15378"/>
        <dbReference type="ChEBI" id="CHEBI:16526"/>
        <dbReference type="ChEBI" id="CHEBI:33019"/>
        <dbReference type="ChEBI" id="CHEBI:37575"/>
        <dbReference type="ChEBI" id="CHEBI:57841"/>
        <dbReference type="ChEBI" id="CHEBI:62899"/>
        <dbReference type="EC" id="2.5.1.3"/>
    </reaction>
</comment>
<comment type="catalytic activity">
    <reaction evidence="1">
        <text>2-(2-carboxy-4-methylthiazol-5-yl)ethyl phosphate + 4-amino-2-methyl-5-(diphosphooxymethyl)pyrimidine + 2 H(+) = thiamine phosphate + CO2 + diphosphate</text>
        <dbReference type="Rhea" id="RHEA:47848"/>
        <dbReference type="ChEBI" id="CHEBI:15378"/>
        <dbReference type="ChEBI" id="CHEBI:16526"/>
        <dbReference type="ChEBI" id="CHEBI:33019"/>
        <dbReference type="ChEBI" id="CHEBI:37575"/>
        <dbReference type="ChEBI" id="CHEBI:57841"/>
        <dbReference type="ChEBI" id="CHEBI:62890"/>
        <dbReference type="EC" id="2.5.1.3"/>
    </reaction>
</comment>
<comment type="catalytic activity">
    <reaction evidence="1">
        <text>4-methyl-5-(2-phosphooxyethyl)-thiazole + 4-amino-2-methyl-5-(diphosphooxymethyl)pyrimidine + H(+) = thiamine phosphate + diphosphate</text>
        <dbReference type="Rhea" id="RHEA:22328"/>
        <dbReference type="ChEBI" id="CHEBI:15378"/>
        <dbReference type="ChEBI" id="CHEBI:33019"/>
        <dbReference type="ChEBI" id="CHEBI:37575"/>
        <dbReference type="ChEBI" id="CHEBI:57841"/>
        <dbReference type="ChEBI" id="CHEBI:58296"/>
        <dbReference type="EC" id="2.5.1.3"/>
    </reaction>
</comment>
<comment type="cofactor">
    <cofactor evidence="1">
        <name>Mg(2+)</name>
        <dbReference type="ChEBI" id="CHEBI:18420"/>
    </cofactor>
    <text evidence="1">Binds 1 Mg(2+) ion per subunit.</text>
</comment>
<comment type="pathway">
    <text evidence="1">Cofactor biosynthesis; thiamine diphosphate biosynthesis; thiamine phosphate from 4-amino-2-methyl-5-diphosphomethylpyrimidine and 4-methyl-5-(2-phosphoethyl)-thiazole: step 1/1.</text>
</comment>
<comment type="similarity">
    <text evidence="1">Belongs to the thiamine-phosphate synthase family.</text>
</comment>
<accession>B2HPZ9</accession>
<proteinExistence type="inferred from homology"/>
<evidence type="ECO:0000255" key="1">
    <source>
        <dbReference type="HAMAP-Rule" id="MF_00097"/>
    </source>
</evidence>
<reference key="1">
    <citation type="journal article" date="2008" name="Genome Res.">
        <title>Insights from the complete genome sequence of Mycobacterium marinum on the evolution of Mycobacterium tuberculosis.</title>
        <authorList>
            <person name="Stinear T.P."/>
            <person name="Seemann T."/>
            <person name="Harrison P.F."/>
            <person name="Jenkin G.A."/>
            <person name="Davies J.K."/>
            <person name="Johnson P.D."/>
            <person name="Abdellah Z."/>
            <person name="Arrowsmith C."/>
            <person name="Chillingworth T."/>
            <person name="Churcher C."/>
            <person name="Clarke K."/>
            <person name="Cronin A."/>
            <person name="Davis P."/>
            <person name="Goodhead I."/>
            <person name="Holroyd N."/>
            <person name="Jagels K."/>
            <person name="Lord A."/>
            <person name="Moule S."/>
            <person name="Mungall K."/>
            <person name="Norbertczak H."/>
            <person name="Quail M.A."/>
            <person name="Rabbinowitsch E."/>
            <person name="Walker D."/>
            <person name="White B."/>
            <person name="Whitehead S."/>
            <person name="Small P.L."/>
            <person name="Brosch R."/>
            <person name="Ramakrishnan L."/>
            <person name="Fischbach M.A."/>
            <person name="Parkhill J."/>
            <person name="Cole S.T."/>
        </authorList>
    </citation>
    <scope>NUCLEOTIDE SEQUENCE [LARGE SCALE GENOMIC DNA]</scope>
    <source>
        <strain>ATCC BAA-535 / M</strain>
    </source>
</reference>